<proteinExistence type="inferred from homology"/>
<name>SG11A_PANTR</name>
<keyword id="KW-0025">Alternative splicing</keyword>
<keyword id="KW-0325">Glycoprotein</keyword>
<keyword id="KW-1185">Reference proteome</keyword>
<keyword id="KW-0964">Secreted</keyword>
<keyword id="KW-0732">Signal</keyword>
<protein>
    <recommendedName>
        <fullName evidence="1">Sperm-associated antigen 11A</fullName>
    </recommendedName>
    <alternativeName>
        <fullName evidence="3">Antimicrobial-like protein Bin-1b</fullName>
    </alternativeName>
    <alternativeName>
        <fullName evidence="5">EP2 protein</fullName>
    </alternativeName>
</protein>
<evidence type="ECO:0000250" key="1">
    <source>
        <dbReference type="UniProtKB" id="Q6PDA7"/>
    </source>
</evidence>
<evidence type="ECO:0000250" key="2">
    <source>
        <dbReference type="UniProtKB" id="Q8K4N2"/>
    </source>
</evidence>
<evidence type="ECO:0000250" key="3">
    <source>
        <dbReference type="UniProtKB" id="Q8VBV2"/>
    </source>
</evidence>
<evidence type="ECO:0000255" key="4"/>
<evidence type="ECO:0000303" key="5">
    <source>
    </source>
</evidence>
<evidence type="ECO:0000305" key="6"/>
<sequence>MRQRLLPSVTSLLLVALLFPGSSQARHVNHSATEALGELRERAPGQGTNGFQLLRHAVKRDLLPPRTPPYQVHISHQEARGPSFKICVGFLGPRWARGCSTGN</sequence>
<organism>
    <name type="scientific">Pan troglodytes</name>
    <name type="common">Chimpanzee</name>
    <dbReference type="NCBI Taxonomy" id="9598"/>
    <lineage>
        <taxon>Eukaryota</taxon>
        <taxon>Metazoa</taxon>
        <taxon>Chordata</taxon>
        <taxon>Craniata</taxon>
        <taxon>Vertebrata</taxon>
        <taxon>Euteleostomi</taxon>
        <taxon>Mammalia</taxon>
        <taxon>Eutheria</taxon>
        <taxon>Euarchontoglires</taxon>
        <taxon>Primates</taxon>
        <taxon>Haplorrhini</taxon>
        <taxon>Catarrhini</taxon>
        <taxon>Hominidae</taxon>
        <taxon>Pan</taxon>
    </lineage>
</organism>
<comment type="function">
    <text evidence="3">Has antimicrobial activity against E.coli (By similarity). Plays a role in the defense response in the male reproductive tract, contributing to sperm maturation, storage and protection (By similarity).</text>
</comment>
<comment type="subcellular location">
    <subcellularLocation>
        <location evidence="6">Secreted</location>
    </subcellularLocation>
</comment>
<comment type="alternative products">
    <event type="alternative splicing"/>
    <isoform>
        <id>Q9MZ28-1</id>
        <name evidence="5">EP2A</name>
        <sequence type="displayed"/>
    </isoform>
    <isoform>
        <id>Q9MZ28-2</id>
        <name evidence="5">EP2B</name>
        <sequence type="described" ref="VSP_006214"/>
    </isoform>
    <isoform>
        <id>Q9MZ28-3</id>
        <name evidence="5">EP2C</name>
        <sequence type="described" ref="VSP_006215"/>
    </isoform>
    <isoform>
        <id>Q9MZ28-4</id>
        <name evidence="5">EP2D</name>
        <sequence type="described" ref="VSP_006216"/>
    </isoform>
</comment>
<comment type="similarity">
    <text evidence="6">Belongs to the SPAG11 family.</text>
</comment>
<reference key="1">
    <citation type="journal article" date="2000" name="J. Androl.">
        <title>Multiple promoter and splicing mRNA variants of the epididymis-specific gene EP2.</title>
        <authorList>
            <person name="Frohlich O."/>
            <person name="Po C."/>
            <person name="Murphy T."/>
            <person name="Young L.G."/>
        </authorList>
    </citation>
    <scope>NUCLEOTIDE SEQUENCE [MRNA] (ISOFORMS EP2A; EP2B; EP2C AND EP2D)</scope>
</reference>
<feature type="signal peptide" evidence="4">
    <location>
        <begin position="1"/>
        <end position="24"/>
    </location>
</feature>
<feature type="chain" id="PRO_0000033186" description="Sperm-associated antigen 11A">
    <location>
        <begin position="25"/>
        <end position="103"/>
    </location>
</feature>
<feature type="glycosylation site" description="N-linked (GlcNAc...) asparagine" evidence="4">
    <location>
        <position position="29"/>
    </location>
</feature>
<feature type="splice variant" id="VSP_006214" description="In isoform EP2B." evidence="6">
    <original>MRQRLLPSVTSLLLVALLFPGSSQARHVNHSATEALGELRERAPGQGTNGFQLLRHAVKRDLLPPRTPPYQ</original>
    <variation>MKVFFLFAVLFCLVQTNS</variation>
    <location>
        <begin position="1"/>
        <end position="71"/>
    </location>
</feature>
<feature type="splice variant" id="VSP_006215" description="In isoform EP2C." evidence="6">
    <original>VHISHQEARGPSFKICVGFLGPRWARGCSTGN</original>
    <variation>EPASDLKVVDFRRSEGFCQEYCNYMETQVGYCPKKKDACCLH</variation>
    <location>
        <begin position="72"/>
        <end position="103"/>
    </location>
</feature>
<feature type="splice variant" id="VSP_006216" description="In isoform EP2D." evidence="6">
    <original>VHISHQEARGPSFKICVGFLGPRWARGCSTGN</original>
    <variation>GDVPLGIRNTICRMQQGICRLFFCHSGEKKRDICSDPWNRCCVSNTDEEGKEKPEMDGRSGI</variation>
    <location>
        <begin position="72"/>
        <end position="103"/>
    </location>
</feature>
<dbReference type="EMBL" id="AF263551">
    <property type="protein sequence ID" value="AAF87718.1"/>
    <property type="molecule type" value="mRNA"/>
</dbReference>
<dbReference type="EMBL" id="AF263552">
    <property type="protein sequence ID" value="AAF87719.1"/>
    <property type="molecule type" value="mRNA"/>
</dbReference>
<dbReference type="EMBL" id="AF263553">
    <property type="protein sequence ID" value="AAF87720.1"/>
    <property type="molecule type" value="mRNA"/>
</dbReference>
<dbReference type="EMBL" id="AF263554">
    <property type="protein sequence ID" value="AAF87721.1"/>
    <property type="molecule type" value="mRNA"/>
</dbReference>
<dbReference type="RefSeq" id="NP_001103705.1">
    <molecule id="Q9MZ28-1"/>
    <property type="nucleotide sequence ID" value="NM_001110235.1"/>
</dbReference>
<dbReference type="RefSeq" id="NP_001103706.1">
    <molecule id="Q9MZ28-2"/>
    <property type="nucleotide sequence ID" value="NM_001110236.1"/>
</dbReference>
<dbReference type="RefSeq" id="NP_001103707.1">
    <molecule id="Q9MZ28-3"/>
    <property type="nucleotide sequence ID" value="NM_001110237.1"/>
</dbReference>
<dbReference type="RefSeq" id="NP_001103708.1">
    <molecule id="Q9MZ28-4"/>
    <property type="nucleotide sequence ID" value="NM_001110238.1"/>
</dbReference>
<dbReference type="STRING" id="9598.ENSPTRP00000034197"/>
<dbReference type="GlyCosmos" id="Q9MZ28">
    <property type="glycosylation" value="1 site, No reported glycans"/>
</dbReference>
<dbReference type="PaxDb" id="9598-ENSPTRP00000055544"/>
<dbReference type="Ensembl" id="ENSPTRT00000037003.5">
    <molecule id="Q9MZ28-3"/>
    <property type="protein sequence ID" value="ENSPTRP00000034197.4"/>
    <property type="gene ID" value="ENSPTRG00000019963.7"/>
</dbReference>
<dbReference type="Ensembl" id="ENSPTRT00000043595.4">
    <molecule id="Q9MZ28-2"/>
    <property type="protein sequence ID" value="ENSPTRP00000039008.3"/>
    <property type="gene ID" value="ENSPTRG00000019963.7"/>
</dbReference>
<dbReference type="Ensembl" id="ENSPTRT00000047238.3">
    <molecule id="Q9MZ28-1"/>
    <property type="protein sequence ID" value="ENSPTRP00000046551.2"/>
    <property type="gene ID" value="ENSPTRG00000019963.7"/>
</dbReference>
<dbReference type="GeneID" id="450159"/>
<dbReference type="KEGG" id="ptr:450159"/>
<dbReference type="CTD" id="10407"/>
<dbReference type="eggNOG" id="ENOG502TDV0">
    <property type="taxonomic scope" value="Eukaryota"/>
</dbReference>
<dbReference type="GeneTree" id="ENSGT00940000161432"/>
<dbReference type="HOGENOM" id="CLU_178650_0_0_1"/>
<dbReference type="InParanoid" id="Q9MZ28"/>
<dbReference type="OMA" id="GYCQEYC"/>
<dbReference type="OrthoDB" id="17622at9604"/>
<dbReference type="TreeFam" id="TF338214"/>
<dbReference type="Proteomes" id="UP000002277">
    <property type="component" value="Unplaced"/>
</dbReference>
<dbReference type="GO" id="GO:0005576">
    <property type="term" value="C:extracellular region"/>
    <property type="evidence" value="ECO:0007669"/>
    <property type="project" value="UniProtKB-SubCell"/>
</dbReference>
<dbReference type="InterPro" id="IPR007988">
    <property type="entry name" value="Sperm_Ag_11A_B"/>
</dbReference>
<dbReference type="PANTHER" id="PTHR14081:SF1">
    <property type="entry name" value="SPERM-ASSOCIATED ANTIGEN 11A-RELATED"/>
    <property type="match status" value="1"/>
</dbReference>
<dbReference type="PANTHER" id="PTHR14081">
    <property type="entry name" value="SPERM-ASSOCIATED ANTIGEN 11A-RELATED-RELATED"/>
    <property type="match status" value="1"/>
</dbReference>
<dbReference type="Pfam" id="PF05324">
    <property type="entry name" value="Sperm_Ag_HE2"/>
    <property type="match status" value="1"/>
</dbReference>
<gene>
    <name evidence="1" type="primary">SPAG11A</name>
    <name evidence="2" type="synonym">BIN1B</name>
    <name evidence="5" type="synonym">EP2</name>
    <name evidence="1" type="synonym">SPAG11</name>
</gene>
<accession>Q9MZ28</accession>
<accession>Q9MZ27</accession>
<accession>Q9MZ29</accession>